<feature type="chain" id="PRO_0000437797" description="Heavy metal-associated isoprenylated plant protein 4">
    <location>
        <begin position="1"/>
        <end position="284"/>
    </location>
</feature>
<feature type="propeptide" id="PRO_0000437798" description="Removed in mature form" evidence="8">
    <location>
        <begin position="285"/>
        <end position="287"/>
    </location>
</feature>
<feature type="domain" description="HMA 1" evidence="4">
    <location>
        <begin position="14"/>
        <end position="80"/>
    </location>
</feature>
<feature type="domain" description="HMA 2" evidence="4">
    <location>
        <begin position="112"/>
        <end position="176"/>
    </location>
</feature>
<feature type="region of interest" description="Disordered" evidence="5">
    <location>
        <begin position="181"/>
        <end position="232"/>
    </location>
</feature>
<feature type="coiled-coil region" evidence="3">
    <location>
        <begin position="179"/>
        <end position="235"/>
    </location>
</feature>
<feature type="binding site" evidence="4">
    <location>
        <position position="25"/>
    </location>
    <ligand>
        <name>a metal cation</name>
        <dbReference type="ChEBI" id="CHEBI:25213"/>
        <label>1</label>
    </ligand>
</feature>
<feature type="binding site" evidence="4">
    <location>
        <position position="28"/>
    </location>
    <ligand>
        <name>a metal cation</name>
        <dbReference type="ChEBI" id="CHEBI:25213"/>
        <label>1</label>
    </ligand>
</feature>
<feature type="binding site" evidence="4">
    <location>
        <position position="123"/>
    </location>
    <ligand>
        <name>a metal cation</name>
        <dbReference type="ChEBI" id="CHEBI:25213"/>
        <label>2</label>
    </ligand>
</feature>
<feature type="binding site" evidence="4">
    <location>
        <position position="126"/>
    </location>
    <ligand>
        <name>a metal cation</name>
        <dbReference type="ChEBI" id="CHEBI:25213"/>
        <label>2</label>
    </ligand>
</feature>
<feature type="modified residue" description="Cysteine methyl ester" evidence="2">
    <location>
        <position position="284"/>
    </location>
</feature>
<feature type="lipid moiety-binding region" description="S-farnesyl cysteine" evidence="2">
    <location>
        <position position="284"/>
    </location>
</feature>
<evidence type="ECO:0000250" key="1">
    <source>
        <dbReference type="UniProtKB" id="Q9LZF1"/>
    </source>
</evidence>
<evidence type="ECO:0000250" key="2">
    <source>
        <dbReference type="UniProtKB" id="Q9SZN7"/>
    </source>
</evidence>
<evidence type="ECO:0000255" key="3"/>
<evidence type="ECO:0000255" key="4">
    <source>
        <dbReference type="PROSITE-ProRule" id="PRU00280"/>
    </source>
</evidence>
<evidence type="ECO:0000256" key="5">
    <source>
        <dbReference type="SAM" id="MobiDB-lite"/>
    </source>
</evidence>
<evidence type="ECO:0000303" key="6">
    <source>
    </source>
</evidence>
<evidence type="ECO:0000303" key="7">
    <source>
    </source>
</evidence>
<evidence type="ECO:0000305" key="8"/>
<evidence type="ECO:0000312" key="9">
    <source>
        <dbReference type="Araport" id="AT1G29000"/>
    </source>
</evidence>
<evidence type="ECO:0000312" key="10">
    <source>
        <dbReference type="EMBL" id="AAF24557.2"/>
    </source>
</evidence>
<reference key="1">
    <citation type="journal article" date="2000" name="Nature">
        <title>Sequence and analysis of chromosome 1 of the plant Arabidopsis thaliana.</title>
        <authorList>
            <person name="Theologis A."/>
            <person name="Ecker J.R."/>
            <person name="Palm C.J."/>
            <person name="Federspiel N.A."/>
            <person name="Kaul S."/>
            <person name="White O."/>
            <person name="Alonso J."/>
            <person name="Altafi H."/>
            <person name="Araujo R."/>
            <person name="Bowman C.L."/>
            <person name="Brooks S.Y."/>
            <person name="Buehler E."/>
            <person name="Chan A."/>
            <person name="Chao Q."/>
            <person name="Chen H."/>
            <person name="Cheuk R.F."/>
            <person name="Chin C.W."/>
            <person name="Chung M.K."/>
            <person name="Conn L."/>
            <person name="Conway A.B."/>
            <person name="Conway A.R."/>
            <person name="Creasy T.H."/>
            <person name="Dewar K."/>
            <person name="Dunn P."/>
            <person name="Etgu P."/>
            <person name="Feldblyum T.V."/>
            <person name="Feng J.-D."/>
            <person name="Fong B."/>
            <person name="Fujii C.Y."/>
            <person name="Gill J.E."/>
            <person name="Goldsmith A.D."/>
            <person name="Haas B."/>
            <person name="Hansen N.F."/>
            <person name="Hughes B."/>
            <person name="Huizar L."/>
            <person name="Hunter J.L."/>
            <person name="Jenkins J."/>
            <person name="Johnson-Hopson C."/>
            <person name="Khan S."/>
            <person name="Khaykin E."/>
            <person name="Kim C.J."/>
            <person name="Koo H.L."/>
            <person name="Kremenetskaia I."/>
            <person name="Kurtz D.B."/>
            <person name="Kwan A."/>
            <person name="Lam B."/>
            <person name="Langin-Hooper S."/>
            <person name="Lee A."/>
            <person name="Lee J.M."/>
            <person name="Lenz C.A."/>
            <person name="Li J.H."/>
            <person name="Li Y.-P."/>
            <person name="Lin X."/>
            <person name="Liu S.X."/>
            <person name="Liu Z.A."/>
            <person name="Luros J.S."/>
            <person name="Maiti R."/>
            <person name="Marziali A."/>
            <person name="Militscher J."/>
            <person name="Miranda M."/>
            <person name="Nguyen M."/>
            <person name="Nierman W.C."/>
            <person name="Osborne B.I."/>
            <person name="Pai G."/>
            <person name="Peterson J."/>
            <person name="Pham P.K."/>
            <person name="Rizzo M."/>
            <person name="Rooney T."/>
            <person name="Rowley D."/>
            <person name="Sakano H."/>
            <person name="Salzberg S.L."/>
            <person name="Schwartz J.R."/>
            <person name="Shinn P."/>
            <person name="Southwick A.M."/>
            <person name="Sun H."/>
            <person name="Tallon L.J."/>
            <person name="Tambunga G."/>
            <person name="Toriumi M.J."/>
            <person name="Town C.D."/>
            <person name="Utterback T."/>
            <person name="Van Aken S."/>
            <person name="Vaysberg M."/>
            <person name="Vysotskaia V.S."/>
            <person name="Walker M."/>
            <person name="Wu D."/>
            <person name="Yu G."/>
            <person name="Fraser C.M."/>
            <person name="Venter J.C."/>
            <person name="Davis R.W."/>
        </authorList>
    </citation>
    <scope>NUCLEOTIDE SEQUENCE [LARGE SCALE GENOMIC DNA]</scope>
    <source>
        <strain>cv. Columbia</strain>
    </source>
</reference>
<reference key="2">
    <citation type="journal article" date="2017" name="Plant J.">
        <title>Araport11: a complete reannotation of the Arabidopsis thaliana reference genome.</title>
        <authorList>
            <person name="Cheng C.Y."/>
            <person name="Krishnakumar V."/>
            <person name="Chan A.P."/>
            <person name="Thibaud-Nissen F."/>
            <person name="Schobel S."/>
            <person name="Town C.D."/>
        </authorList>
    </citation>
    <scope>GENOME REANNOTATION</scope>
    <source>
        <strain>cv. Columbia</strain>
    </source>
</reference>
<reference key="3">
    <citation type="journal article" date="2010" name="Metallomics">
        <title>Metallochaperone-like genes in Arabidopsis thaliana.</title>
        <authorList>
            <person name="Tehseen M."/>
            <person name="Cairns N."/>
            <person name="Sherson S."/>
            <person name="Cobbett C.S."/>
        </authorList>
    </citation>
    <scope>GENE FAMILY</scope>
    <scope>NOMENCLATURE</scope>
</reference>
<reference key="4">
    <citation type="journal article" date="2013" name="FEBS J.">
        <title>Heavy metal-associated isoprenylated plant protein (HIPP): characterization of a family of proteins exclusive to plants.</title>
        <authorList>
            <person name="de Abreu-Neto J.B."/>
            <person name="Turchetto-Zolet A.C."/>
            <person name="de Oliveira L.F."/>
            <person name="Zanettini M.H."/>
            <person name="Margis-Pinheiro M."/>
        </authorList>
    </citation>
    <scope>GENE FAMILY</scope>
    <scope>NOMENCLATURE</scope>
</reference>
<gene>
    <name evidence="6 7" type="primary">HIPP04</name>
    <name evidence="9" type="ordered locus">At1g29000</name>
    <name evidence="10" type="ORF">F1K23.4</name>
</gene>
<accession>Q9SHQ8</accession>
<dbReference type="EMBL" id="AC007508">
    <property type="protein sequence ID" value="AAF24557.2"/>
    <property type="molecule type" value="Genomic_DNA"/>
</dbReference>
<dbReference type="EMBL" id="CP002684">
    <property type="protein sequence ID" value="AEE31027.1"/>
    <property type="molecule type" value="Genomic_DNA"/>
</dbReference>
<dbReference type="EMBL" id="CP002684">
    <property type="protein sequence ID" value="ANM58287.1"/>
    <property type="molecule type" value="Genomic_DNA"/>
</dbReference>
<dbReference type="RefSeq" id="NP_001319102.1">
    <property type="nucleotide sequence ID" value="NM_001332827.1"/>
</dbReference>
<dbReference type="RefSeq" id="NP_174195.1">
    <property type="nucleotide sequence ID" value="NM_102641.2"/>
</dbReference>
<dbReference type="SMR" id="Q9SHQ8"/>
<dbReference type="FunCoup" id="Q9SHQ8">
    <property type="interactions" value="34"/>
</dbReference>
<dbReference type="STRING" id="3702.Q9SHQ8"/>
<dbReference type="SwissPalm" id="Q9SHQ8"/>
<dbReference type="PaxDb" id="3702-AT1G29000.1"/>
<dbReference type="ProteomicsDB" id="230365"/>
<dbReference type="EnsemblPlants" id="AT1G29000.1">
    <property type="protein sequence ID" value="AT1G29000.1"/>
    <property type="gene ID" value="AT1G29000"/>
</dbReference>
<dbReference type="EnsemblPlants" id="AT1G29000.2">
    <property type="protein sequence ID" value="AT1G29000.2"/>
    <property type="gene ID" value="AT1G29000"/>
</dbReference>
<dbReference type="GeneID" id="839774"/>
<dbReference type="Gramene" id="AT1G29000.1">
    <property type="protein sequence ID" value="AT1G29000.1"/>
    <property type="gene ID" value="AT1G29000"/>
</dbReference>
<dbReference type="Gramene" id="AT1G29000.2">
    <property type="protein sequence ID" value="AT1G29000.2"/>
    <property type="gene ID" value="AT1G29000"/>
</dbReference>
<dbReference type="KEGG" id="ath:AT1G29000"/>
<dbReference type="Araport" id="AT1G29000"/>
<dbReference type="TAIR" id="AT1G29000"/>
<dbReference type="eggNOG" id="KOG1603">
    <property type="taxonomic scope" value="Eukaryota"/>
</dbReference>
<dbReference type="HOGENOM" id="CLU_039886_3_1_1"/>
<dbReference type="InParanoid" id="Q9SHQ8"/>
<dbReference type="OMA" id="VIKTHKM"/>
<dbReference type="OrthoDB" id="688249at2759"/>
<dbReference type="PhylomeDB" id="Q9SHQ8"/>
<dbReference type="PRO" id="PR:Q9SHQ8"/>
<dbReference type="Proteomes" id="UP000006548">
    <property type="component" value="Chromosome 1"/>
</dbReference>
<dbReference type="ExpressionAtlas" id="Q9SHQ8">
    <property type="expression patterns" value="baseline and differential"/>
</dbReference>
<dbReference type="GO" id="GO:0046872">
    <property type="term" value="F:metal ion binding"/>
    <property type="evidence" value="ECO:0007669"/>
    <property type="project" value="UniProtKB-KW"/>
</dbReference>
<dbReference type="CDD" id="cd00371">
    <property type="entry name" value="HMA"/>
    <property type="match status" value="1"/>
</dbReference>
<dbReference type="Gene3D" id="3.30.70.100">
    <property type="match status" value="2"/>
</dbReference>
<dbReference type="InterPro" id="IPR044577">
    <property type="entry name" value="HIPP4/7/8/17/18/19"/>
</dbReference>
<dbReference type="InterPro" id="IPR006121">
    <property type="entry name" value="HMA_dom"/>
</dbReference>
<dbReference type="InterPro" id="IPR036163">
    <property type="entry name" value="HMA_dom_sf"/>
</dbReference>
<dbReference type="PANTHER" id="PTHR46195:SF12">
    <property type="entry name" value="HEAVY METAL-ASSOCIATED ISOPRENYLATED PLANT PROTEIN 4"/>
    <property type="match status" value="1"/>
</dbReference>
<dbReference type="PANTHER" id="PTHR46195">
    <property type="entry name" value="HEAVY METAL-ASSOCIATED ISOPRENYLATED PLANT PROTEIN 7"/>
    <property type="match status" value="1"/>
</dbReference>
<dbReference type="Pfam" id="PF00403">
    <property type="entry name" value="HMA"/>
    <property type="match status" value="2"/>
</dbReference>
<dbReference type="SUPFAM" id="SSF55008">
    <property type="entry name" value="HMA, heavy metal-associated domain"/>
    <property type="match status" value="2"/>
</dbReference>
<dbReference type="PROSITE" id="PS50846">
    <property type="entry name" value="HMA_2"/>
    <property type="match status" value="2"/>
</dbReference>
<keyword id="KW-0175">Coiled coil</keyword>
<keyword id="KW-0449">Lipoprotein</keyword>
<keyword id="KW-0479">Metal-binding</keyword>
<keyword id="KW-0488">Methylation</keyword>
<keyword id="KW-0636">Prenylation</keyword>
<keyword id="KW-1185">Reference proteome</keyword>
<keyword id="KW-0677">Repeat</keyword>
<keyword id="KW-0862">Zinc</keyword>
<proteinExistence type="inferred from homology"/>
<organism>
    <name type="scientific">Arabidopsis thaliana</name>
    <name type="common">Mouse-ear cress</name>
    <dbReference type="NCBI Taxonomy" id="3702"/>
    <lineage>
        <taxon>Eukaryota</taxon>
        <taxon>Viridiplantae</taxon>
        <taxon>Streptophyta</taxon>
        <taxon>Embryophyta</taxon>
        <taxon>Tracheophyta</taxon>
        <taxon>Spermatophyta</taxon>
        <taxon>Magnoliopsida</taxon>
        <taxon>eudicotyledons</taxon>
        <taxon>Gunneridae</taxon>
        <taxon>Pentapetalae</taxon>
        <taxon>rosids</taxon>
        <taxon>malvids</taxon>
        <taxon>Brassicales</taxon>
        <taxon>Brassicaceae</taxon>
        <taxon>Camelineae</taxon>
        <taxon>Arabidopsis</taxon>
    </lineage>
</organism>
<name>HIP4_ARATH</name>
<sequence length="287" mass="33411">MGEEEEKKEKGDEIITAVYKVHLHCRKCACDIKKPLLRFQGVQNVDFDLEKNEIKVKGKIEVVKIHKQIEKWSKKKVELISPKPSEVKKTTTTTTTTSVVEKKTTEIKKDVIRTTVLKVHIHCAQCDKDLQHKLLKHKAIHIVKTDTKAQTLTVQGTIESAKLLAYIKKKVHKHAEIISSKTEEEKKKEEEDKKKKEEEDKKKKEDEKKKEEEKKKEEENKKKEGEKKKEEVKVEVTTKTITQVVEYKEIVKVEGQKDKDGNIPYFVHYVYAPQLFSDENPNACRIV</sequence>
<comment type="function">
    <text evidence="1">Heavy-metal-binding protein.</text>
</comment>
<comment type="similarity">
    <text evidence="8">Belongs to the HIPP family.</text>
</comment>
<protein>
    <recommendedName>
        <fullName evidence="6 7">Heavy metal-associated isoprenylated plant protein 4</fullName>
        <shortName evidence="6 7">AtHIP04</shortName>
    </recommendedName>
</protein>